<accession>A6UVQ4</accession>
<dbReference type="EMBL" id="CP000743">
    <property type="protein sequence ID" value="ABR56576.1"/>
    <property type="molecule type" value="Genomic_DNA"/>
</dbReference>
<dbReference type="RefSeq" id="WP_011973708.1">
    <property type="nucleotide sequence ID" value="NC_009635.1"/>
</dbReference>
<dbReference type="SMR" id="A6UVQ4"/>
<dbReference type="STRING" id="419665.Maeo_0998"/>
<dbReference type="GeneID" id="5326846"/>
<dbReference type="KEGG" id="mae:Maeo_0998"/>
<dbReference type="eggNOG" id="arCOG04179">
    <property type="taxonomic scope" value="Archaea"/>
</dbReference>
<dbReference type="HOGENOM" id="CLU_122978_3_0_2"/>
<dbReference type="OrthoDB" id="7912at2157"/>
<dbReference type="Proteomes" id="UP000001106">
    <property type="component" value="Chromosome"/>
</dbReference>
<dbReference type="GO" id="GO:0005829">
    <property type="term" value="C:cytosol"/>
    <property type="evidence" value="ECO:0007669"/>
    <property type="project" value="TreeGrafter"/>
</dbReference>
<dbReference type="GO" id="GO:0003677">
    <property type="term" value="F:DNA binding"/>
    <property type="evidence" value="ECO:0007669"/>
    <property type="project" value="UniProtKB-UniRule"/>
</dbReference>
<dbReference type="Gene3D" id="1.10.8.140">
    <property type="entry name" value="PDCD5-like"/>
    <property type="match status" value="1"/>
</dbReference>
<dbReference type="HAMAP" id="MF_00026">
    <property type="entry name" value="dsDNA_bind"/>
    <property type="match status" value="1"/>
</dbReference>
<dbReference type="InterPro" id="IPR022889">
    <property type="entry name" value="DNA_bind_arc"/>
</dbReference>
<dbReference type="InterPro" id="IPR002836">
    <property type="entry name" value="PDCD5-like"/>
</dbReference>
<dbReference type="InterPro" id="IPR036883">
    <property type="entry name" value="PDCD5-like_sf"/>
</dbReference>
<dbReference type="NCBIfam" id="NF003268">
    <property type="entry name" value="PRK04239.1"/>
    <property type="match status" value="1"/>
</dbReference>
<dbReference type="PANTHER" id="PTHR10840">
    <property type="entry name" value="PROGRAMMED CELL DEATH PROTEIN 5"/>
    <property type="match status" value="1"/>
</dbReference>
<dbReference type="PANTHER" id="PTHR10840:SF0">
    <property type="entry name" value="PROGRAMMED CELL DEATH PROTEIN 5"/>
    <property type="match status" value="1"/>
</dbReference>
<dbReference type="Pfam" id="PF01984">
    <property type="entry name" value="dsDNA_bind"/>
    <property type="match status" value="1"/>
</dbReference>
<dbReference type="PIRSF" id="PIRSF015730">
    <property type="entry name" value="TFAR19"/>
    <property type="match status" value="1"/>
</dbReference>
<dbReference type="SUPFAM" id="SSF46950">
    <property type="entry name" value="Double-stranded DNA-binding domain"/>
    <property type="match status" value="1"/>
</dbReference>
<organism>
    <name type="scientific">Methanococcus aeolicus (strain ATCC BAA-1280 / DSM 17508 / OCM 812 / Nankai-3)</name>
    <dbReference type="NCBI Taxonomy" id="419665"/>
    <lineage>
        <taxon>Archaea</taxon>
        <taxon>Methanobacteriati</taxon>
        <taxon>Methanobacteriota</taxon>
        <taxon>Methanomada group</taxon>
        <taxon>Methanococci</taxon>
        <taxon>Methanococcales</taxon>
        <taxon>Methanococcaceae</taxon>
        <taxon>Methanococcus</taxon>
    </lineage>
</organism>
<keyword id="KW-0238">DNA-binding</keyword>
<feature type="chain" id="PRO_1000002195" description="DNA-binding protein Maeo_0998">
    <location>
        <begin position="1"/>
        <end position="119"/>
    </location>
</feature>
<feature type="region of interest" description="Disordered" evidence="2">
    <location>
        <begin position="1"/>
        <end position="36"/>
    </location>
</feature>
<feature type="compositionally biased region" description="Basic and acidic residues" evidence="2">
    <location>
        <begin position="1"/>
        <end position="11"/>
    </location>
</feature>
<feature type="compositionally biased region" description="Low complexity" evidence="2">
    <location>
        <begin position="15"/>
        <end position="32"/>
    </location>
</feature>
<comment type="similarity">
    <text evidence="1">Belongs to the PDCD5 family.</text>
</comment>
<gene>
    <name type="ordered locus">Maeo_0998</name>
</gene>
<protein>
    <recommendedName>
        <fullName evidence="1">DNA-binding protein Maeo_0998</fullName>
    </recommendedName>
</protein>
<name>Y998_META3</name>
<reference key="1">
    <citation type="submission" date="2007-06" db="EMBL/GenBank/DDBJ databases">
        <title>Complete sequence of Methanococcus aeolicus Nankai-3.</title>
        <authorList>
            <consortium name="US DOE Joint Genome Institute"/>
            <person name="Copeland A."/>
            <person name="Lucas S."/>
            <person name="Lapidus A."/>
            <person name="Barry K."/>
            <person name="Glavina del Rio T."/>
            <person name="Dalin E."/>
            <person name="Tice H."/>
            <person name="Pitluck S."/>
            <person name="Chain P."/>
            <person name="Malfatti S."/>
            <person name="Shin M."/>
            <person name="Vergez L."/>
            <person name="Schmutz J."/>
            <person name="Larimer F."/>
            <person name="Land M."/>
            <person name="Hauser L."/>
            <person name="Kyrpides N."/>
            <person name="Lykidis A."/>
            <person name="Sieprawska-Lupa M."/>
            <person name="Whitman W.B."/>
            <person name="Richardson P."/>
        </authorList>
    </citation>
    <scope>NUCLEOTIDE SEQUENCE [LARGE SCALE GENOMIC DNA]</scope>
    <source>
        <strain>ATCC BAA-1280 / DSM 17508 / OCM 812 / Nankai-3</strain>
    </source>
</reference>
<evidence type="ECO:0000255" key="1">
    <source>
        <dbReference type="HAMAP-Rule" id="MF_00026"/>
    </source>
</evidence>
<evidence type="ECO:0000256" key="2">
    <source>
        <dbReference type="SAM" id="MobiDB-lite"/>
    </source>
</evidence>
<proteinExistence type="inferred from homology"/>
<sequence>MDIEEIKRQKMMELQQQQAQGAPNPEEIQQQQEQERAAYEAQKKQIMKKILSEEARHRLSNIKMVKPEFAEQVEMQLIQLAQSGRLPIPVSDEYFKTLLDQLYTMGSAKKKRDIKFVRK</sequence>